<feature type="signal peptide" evidence="1">
    <location>
        <begin position="1"/>
        <end position="20"/>
    </location>
</feature>
<feature type="chain" id="PRO_0000253888" description="Seripauperin-10">
    <location>
        <begin position="21"/>
        <end position="120"/>
    </location>
</feature>
<evidence type="ECO:0000255" key="1"/>
<evidence type="ECO:0000305" key="2"/>
<comment type="similarity">
    <text evidence="2">Belongs to the SRP1/TIP1 family. Seripauperin subfamily.</text>
</comment>
<keyword id="KW-1185">Reference proteome</keyword>
<keyword id="KW-0732">Signal</keyword>
<reference key="1">
    <citation type="journal article" date="1997" name="Nature">
        <title>The nucleotide sequence of Saccharomyces cerevisiae chromosome IV.</title>
        <authorList>
            <person name="Jacq C."/>
            <person name="Alt-Moerbe J."/>
            <person name="Andre B."/>
            <person name="Arnold W."/>
            <person name="Bahr A."/>
            <person name="Ballesta J.P.G."/>
            <person name="Bargues M."/>
            <person name="Baron L."/>
            <person name="Becker A."/>
            <person name="Biteau N."/>
            <person name="Bloecker H."/>
            <person name="Blugeon C."/>
            <person name="Boskovic J."/>
            <person name="Brandt P."/>
            <person name="Brueckner M."/>
            <person name="Buitrago M.J."/>
            <person name="Coster F."/>
            <person name="Delaveau T."/>
            <person name="del Rey F."/>
            <person name="Dujon B."/>
            <person name="Eide L.G."/>
            <person name="Garcia-Cantalejo J.M."/>
            <person name="Goffeau A."/>
            <person name="Gomez-Peris A."/>
            <person name="Granotier C."/>
            <person name="Hanemann V."/>
            <person name="Hankeln T."/>
            <person name="Hoheisel J.D."/>
            <person name="Jaeger W."/>
            <person name="Jimenez A."/>
            <person name="Jonniaux J.-L."/>
            <person name="Kraemer C."/>
            <person name="Kuester H."/>
            <person name="Laamanen P."/>
            <person name="Legros Y."/>
            <person name="Louis E.J."/>
            <person name="Moeller-Rieker S."/>
            <person name="Monnet A."/>
            <person name="Moro M."/>
            <person name="Mueller-Auer S."/>
            <person name="Nussbaumer B."/>
            <person name="Paricio N."/>
            <person name="Paulin L."/>
            <person name="Perea J."/>
            <person name="Perez-Alonso M."/>
            <person name="Perez-Ortin J.E."/>
            <person name="Pohl T.M."/>
            <person name="Prydz H."/>
            <person name="Purnelle B."/>
            <person name="Rasmussen S.W."/>
            <person name="Remacha M.A."/>
            <person name="Revuelta J.L."/>
            <person name="Rieger M."/>
            <person name="Salom D."/>
            <person name="Saluz H.P."/>
            <person name="Saiz J.E."/>
            <person name="Saren A.-M."/>
            <person name="Schaefer M."/>
            <person name="Scharfe M."/>
            <person name="Schmidt E.R."/>
            <person name="Schneider C."/>
            <person name="Scholler P."/>
            <person name="Schwarz S."/>
            <person name="Soler-Mira A."/>
            <person name="Urrestarazu L.A."/>
            <person name="Verhasselt P."/>
            <person name="Vissers S."/>
            <person name="Voet M."/>
            <person name="Volckaert G."/>
            <person name="Wagner G."/>
            <person name="Wambutt R."/>
            <person name="Wedler E."/>
            <person name="Wedler H."/>
            <person name="Woelfl S."/>
            <person name="Harris D.E."/>
            <person name="Bowman S."/>
            <person name="Brown D."/>
            <person name="Churcher C.M."/>
            <person name="Connor R."/>
            <person name="Dedman K."/>
            <person name="Gentles S."/>
            <person name="Hamlin N."/>
            <person name="Hunt S."/>
            <person name="Jones L."/>
            <person name="McDonald S."/>
            <person name="Murphy L.D."/>
            <person name="Niblett D."/>
            <person name="Odell C."/>
            <person name="Oliver K."/>
            <person name="Rajandream M.A."/>
            <person name="Richards C."/>
            <person name="Shore L."/>
            <person name="Walsh S.V."/>
            <person name="Barrell B.G."/>
            <person name="Dietrich F.S."/>
            <person name="Mulligan J.T."/>
            <person name="Allen E."/>
            <person name="Araujo R."/>
            <person name="Aviles E."/>
            <person name="Berno A."/>
            <person name="Carpenter J."/>
            <person name="Chen E."/>
            <person name="Cherry J.M."/>
            <person name="Chung E."/>
            <person name="Duncan M."/>
            <person name="Hunicke-Smith S."/>
            <person name="Hyman R.W."/>
            <person name="Komp C."/>
            <person name="Lashkari D."/>
            <person name="Lew H."/>
            <person name="Lin D."/>
            <person name="Mosedale D."/>
            <person name="Nakahara K."/>
            <person name="Namath A."/>
            <person name="Oefner P."/>
            <person name="Oh C."/>
            <person name="Petel F.X."/>
            <person name="Roberts D."/>
            <person name="Schramm S."/>
            <person name="Schroeder M."/>
            <person name="Shogren T."/>
            <person name="Shroff N."/>
            <person name="Winant A."/>
            <person name="Yelton M.A."/>
            <person name="Botstein D."/>
            <person name="Davis R.W."/>
            <person name="Johnston M."/>
            <person name="Andrews S."/>
            <person name="Brinkman R."/>
            <person name="Cooper J."/>
            <person name="Ding H."/>
            <person name="Du Z."/>
            <person name="Favello A."/>
            <person name="Fulton L."/>
            <person name="Gattung S."/>
            <person name="Greco T."/>
            <person name="Hallsworth K."/>
            <person name="Hawkins J."/>
            <person name="Hillier L.W."/>
            <person name="Jier M."/>
            <person name="Johnson D."/>
            <person name="Johnston L."/>
            <person name="Kirsten J."/>
            <person name="Kucaba T."/>
            <person name="Langston Y."/>
            <person name="Latreille P."/>
            <person name="Le T."/>
            <person name="Mardis E."/>
            <person name="Menezes S."/>
            <person name="Miller N."/>
            <person name="Nhan M."/>
            <person name="Pauley A."/>
            <person name="Peluso D."/>
            <person name="Rifkin L."/>
            <person name="Riles L."/>
            <person name="Taich A."/>
            <person name="Trevaskis E."/>
            <person name="Vignati D."/>
            <person name="Wilcox L."/>
            <person name="Wohldman P."/>
            <person name="Vaudin M."/>
            <person name="Wilson R."/>
            <person name="Waterston R."/>
            <person name="Albermann K."/>
            <person name="Hani J."/>
            <person name="Heumann K."/>
            <person name="Kleine K."/>
            <person name="Mewes H.-W."/>
            <person name="Zollner A."/>
            <person name="Zaccaria P."/>
        </authorList>
    </citation>
    <scope>NUCLEOTIDE SEQUENCE [LARGE SCALE GENOMIC DNA]</scope>
    <source>
        <strain>ATCC 204508 / S288c</strain>
    </source>
</reference>
<reference key="2">
    <citation type="journal article" date="2014" name="G3 (Bethesda)">
        <title>The reference genome sequence of Saccharomyces cerevisiae: Then and now.</title>
        <authorList>
            <person name="Engel S.R."/>
            <person name="Dietrich F.S."/>
            <person name="Fisk D.G."/>
            <person name="Binkley G."/>
            <person name="Balakrishnan R."/>
            <person name="Costanzo M.C."/>
            <person name="Dwight S.S."/>
            <person name="Hitz B.C."/>
            <person name="Karra K."/>
            <person name="Nash R.S."/>
            <person name="Weng S."/>
            <person name="Wong E.D."/>
            <person name="Lloyd P."/>
            <person name="Skrzypek M.S."/>
            <person name="Miyasato S.R."/>
            <person name="Simison M."/>
            <person name="Cherry J.M."/>
        </authorList>
    </citation>
    <scope>GENOME REANNOTATION</scope>
    <source>
        <strain>ATCC 204508 / S288c</strain>
    </source>
</reference>
<sequence length="120" mass="12834">MVKLTSIAAGVAAIAATASATTTLAQSDERVNLVELGVYVSDIRAHLAQYYMFQAAHPTETYPVEVAEAVFNYGDFTTMLTGIAPDQVTRMITGVPWYSSRLKPAISSALSKVGIYTIAN</sequence>
<accession>Q03050</accession>
<accession>D6VTG1</accession>
<name>PAU10_YEAST</name>
<proteinExistence type="inferred from homology"/>
<protein>
    <recommendedName>
        <fullName>Seripauperin-10</fullName>
    </recommendedName>
</protein>
<gene>
    <name type="primary">PAU10</name>
    <name type="ordered locus">YDR542W</name>
</gene>
<dbReference type="EMBL" id="U43834">
    <property type="protein sequence ID" value="AAB64984.1"/>
    <property type="molecule type" value="Genomic_DNA"/>
</dbReference>
<dbReference type="EMBL" id="BK006938">
    <property type="protein sequence ID" value="DAA12371.1"/>
    <property type="molecule type" value="Genomic_DNA"/>
</dbReference>
<dbReference type="PIR" id="S62021">
    <property type="entry name" value="S62021"/>
</dbReference>
<dbReference type="RefSeq" id="NP_010831.3">
    <property type="nucleotide sequence ID" value="NM_001180850.3"/>
</dbReference>
<dbReference type="BioGRID" id="32589">
    <property type="interactions" value="94"/>
</dbReference>
<dbReference type="DIP" id="DIP-4131N"/>
<dbReference type="FunCoup" id="Q03050">
    <property type="interactions" value="54"/>
</dbReference>
<dbReference type="IntAct" id="Q03050">
    <property type="interactions" value="1"/>
</dbReference>
<dbReference type="STRING" id="4932.YDR542W"/>
<dbReference type="PaxDb" id="4932-YDR542W"/>
<dbReference type="EnsemblFungi" id="YDR542W_mRNA">
    <property type="protein sequence ID" value="YDR542W"/>
    <property type="gene ID" value="YDR542W"/>
</dbReference>
<dbReference type="GeneID" id="852155"/>
<dbReference type="KEGG" id="sce:YDR542W"/>
<dbReference type="AGR" id="SGD:S000002950"/>
<dbReference type="SGD" id="S000002950">
    <property type="gene designation" value="PAU10"/>
</dbReference>
<dbReference type="VEuPathDB" id="FungiDB:YDR542W"/>
<dbReference type="eggNOG" id="ENOG502SR1B">
    <property type="taxonomic scope" value="Eukaryota"/>
</dbReference>
<dbReference type="GeneTree" id="ENSGT00940000176276"/>
<dbReference type="HOGENOM" id="CLU_136376_0_0_1"/>
<dbReference type="InParanoid" id="Q03050"/>
<dbReference type="OMA" id="KQIQWYK"/>
<dbReference type="OrthoDB" id="4059055at2759"/>
<dbReference type="BioCyc" id="YEAST:G3O-30050-MONOMER"/>
<dbReference type="PRO" id="PR:Q03050"/>
<dbReference type="Proteomes" id="UP000002311">
    <property type="component" value="Chromosome IV"/>
</dbReference>
<dbReference type="RNAct" id="Q03050">
    <property type="molecule type" value="protein"/>
</dbReference>
<dbReference type="GO" id="GO:0009277">
    <property type="term" value="C:fungal-type cell wall"/>
    <property type="evidence" value="ECO:0000318"/>
    <property type="project" value="GO_Central"/>
</dbReference>
<dbReference type="GO" id="GO:0000324">
    <property type="term" value="C:fungal-type vacuole"/>
    <property type="evidence" value="ECO:0007005"/>
    <property type="project" value="SGD"/>
</dbReference>
<dbReference type="GO" id="GO:0005199">
    <property type="term" value="F:structural constituent of cell wall"/>
    <property type="evidence" value="ECO:0000318"/>
    <property type="project" value="GO_Central"/>
</dbReference>
<dbReference type="GO" id="GO:0031505">
    <property type="term" value="P:fungal-type cell wall organization"/>
    <property type="evidence" value="ECO:0000318"/>
    <property type="project" value="GO_Central"/>
</dbReference>
<dbReference type="InterPro" id="IPR000992">
    <property type="entry name" value="SRP1_TIP1"/>
</dbReference>
<dbReference type="InterPro" id="IPR050788">
    <property type="entry name" value="Yeast_SRP1/TIP1_CWP"/>
</dbReference>
<dbReference type="PANTHER" id="PTHR31002:SF34">
    <property type="entry name" value="CELL WALL PROTEIN CWP1-RELATED"/>
    <property type="match status" value="1"/>
</dbReference>
<dbReference type="PANTHER" id="PTHR31002">
    <property type="entry name" value="SERIPAUPERIN"/>
    <property type="match status" value="1"/>
</dbReference>
<dbReference type="Pfam" id="PF00660">
    <property type="entry name" value="SRP1_TIP1"/>
    <property type="match status" value="1"/>
</dbReference>
<dbReference type="PROSITE" id="PS00724">
    <property type="entry name" value="SRP1_TIP1"/>
    <property type="match status" value="1"/>
</dbReference>
<organism>
    <name type="scientific">Saccharomyces cerevisiae (strain ATCC 204508 / S288c)</name>
    <name type="common">Baker's yeast</name>
    <dbReference type="NCBI Taxonomy" id="559292"/>
    <lineage>
        <taxon>Eukaryota</taxon>
        <taxon>Fungi</taxon>
        <taxon>Dikarya</taxon>
        <taxon>Ascomycota</taxon>
        <taxon>Saccharomycotina</taxon>
        <taxon>Saccharomycetes</taxon>
        <taxon>Saccharomycetales</taxon>
        <taxon>Saccharomycetaceae</taxon>
        <taxon>Saccharomyces</taxon>
    </lineage>
</organism>